<reference key="1">
    <citation type="journal article" date="1997" name="Nature">
        <title>Episodic adaptive evolution of primate lysozymes.</title>
        <authorList>
            <person name="Messier W."/>
            <person name="Stewart C.B."/>
        </authorList>
    </citation>
    <scope>NUCLEOTIDE SEQUENCE [MRNA]</scope>
    <source>
        <tissue>Blood</tissue>
    </source>
</reference>
<feature type="signal peptide">
    <location>
        <begin position="1"/>
        <end position="18"/>
    </location>
</feature>
<feature type="chain" id="PRO_0000018461" description="Lysozyme C">
    <location>
        <begin position="19"/>
        <end position="148"/>
    </location>
</feature>
<feature type="domain" description="C-type lysozyme" evidence="2">
    <location>
        <begin position="19"/>
        <end position="148"/>
    </location>
</feature>
<feature type="active site" evidence="2">
    <location>
        <position position="53"/>
    </location>
</feature>
<feature type="active site" evidence="2">
    <location>
        <position position="71"/>
    </location>
</feature>
<feature type="disulfide bond" evidence="2">
    <location>
        <begin position="24"/>
        <end position="146"/>
    </location>
</feature>
<feature type="disulfide bond" evidence="2">
    <location>
        <begin position="48"/>
        <end position="134"/>
    </location>
</feature>
<feature type="disulfide bond" evidence="2">
    <location>
        <begin position="83"/>
        <end position="99"/>
    </location>
</feature>
<feature type="disulfide bond" evidence="2">
    <location>
        <begin position="95"/>
        <end position="113"/>
    </location>
</feature>
<organism>
    <name type="scientific">Cercocebus atys</name>
    <name type="common">Sooty mangabey</name>
    <name type="synonym">Cercocebus torquatus atys</name>
    <dbReference type="NCBI Taxonomy" id="9531"/>
    <lineage>
        <taxon>Eukaryota</taxon>
        <taxon>Metazoa</taxon>
        <taxon>Chordata</taxon>
        <taxon>Craniata</taxon>
        <taxon>Vertebrata</taxon>
        <taxon>Euteleostomi</taxon>
        <taxon>Mammalia</taxon>
        <taxon>Eutheria</taxon>
        <taxon>Euarchontoglires</taxon>
        <taxon>Primates</taxon>
        <taxon>Haplorrhini</taxon>
        <taxon>Catarrhini</taxon>
        <taxon>Cercopithecidae</taxon>
        <taxon>Cercopithecinae</taxon>
        <taxon>Cercocebus</taxon>
    </lineage>
</organism>
<accession>P61630</accession>
<accession>P00696</accession>
<accession>P79163</accession>
<accession>P79844</accession>
<name>LYSC_CERAT</name>
<protein>
    <recommendedName>
        <fullName>Lysozyme C</fullName>
        <ecNumber>3.2.1.17</ecNumber>
    </recommendedName>
    <alternativeName>
        <fullName>1,4-beta-N-acetylmuramidase C</fullName>
    </alternativeName>
</protein>
<gene>
    <name type="primary">LYZ</name>
    <name type="synonym">LZM</name>
</gene>
<keyword id="KW-0929">Antimicrobial</keyword>
<keyword id="KW-0081">Bacteriolytic enzyme</keyword>
<keyword id="KW-1015">Disulfide bond</keyword>
<keyword id="KW-0326">Glycosidase</keyword>
<keyword id="KW-0378">Hydrolase</keyword>
<keyword id="KW-1185">Reference proteome</keyword>
<keyword id="KW-0732">Signal</keyword>
<comment type="function">
    <text>Lysozymes have primarily a bacteriolytic function; those in tissues and body fluids are associated with the monocyte-macrophage system and enhance the activity of immunoagents.</text>
</comment>
<comment type="catalytic activity">
    <reaction>
        <text>Hydrolysis of (1-&gt;4)-beta-linkages between N-acetylmuramic acid and N-acetyl-D-glucosamine residues in a peptidoglycan and between N-acetyl-D-glucosamine residues in chitodextrins.</text>
        <dbReference type="EC" id="3.2.1.17"/>
    </reaction>
</comment>
<comment type="subunit">
    <text evidence="1">Monomer.</text>
</comment>
<comment type="miscellaneous">
    <text>Lysozyme C is capable of both hydrolysis and transglycosylation; it also shows a slight esterase activity. It acts rapidly on both peptide-substituted and unsubstituted peptidoglycan, and slowly on chitin oligosaccharides.</text>
</comment>
<comment type="similarity">
    <text evidence="2">Belongs to the glycosyl hydrolase 22 family.</text>
</comment>
<dbReference type="EC" id="3.2.1.17"/>
<dbReference type="EMBL" id="U76920">
    <property type="protein sequence ID" value="AAB41204.1"/>
    <property type="molecule type" value="mRNA"/>
</dbReference>
<dbReference type="RefSeq" id="NP_001292899.1">
    <property type="nucleotide sequence ID" value="NM_001305970.1"/>
</dbReference>
<dbReference type="SMR" id="P61630"/>
<dbReference type="STRING" id="9531.ENSCATP00000036951"/>
<dbReference type="CAZy" id="GH22">
    <property type="family name" value="Glycoside Hydrolase Family 22"/>
</dbReference>
<dbReference type="Ensembl" id="ENSCATT00000061247.1">
    <property type="protein sequence ID" value="ENSCATP00000036951.1"/>
    <property type="gene ID" value="ENSCATG00000041254.1"/>
</dbReference>
<dbReference type="GeneID" id="105581004"/>
<dbReference type="CTD" id="4069"/>
<dbReference type="GeneTree" id="ENSGT00940000153832"/>
<dbReference type="OMA" id="VYERCEF"/>
<dbReference type="Proteomes" id="UP000233060">
    <property type="component" value="Unassembled WGS sequence"/>
</dbReference>
<dbReference type="Bgee" id="ENSCATG00000041254">
    <property type="expression patterns" value="Expressed in bone marrow and 12 other cell types or tissues"/>
</dbReference>
<dbReference type="GO" id="GO:0005615">
    <property type="term" value="C:extracellular space"/>
    <property type="evidence" value="ECO:0007669"/>
    <property type="project" value="Ensembl"/>
</dbReference>
<dbReference type="GO" id="GO:0042802">
    <property type="term" value="F:identical protein binding"/>
    <property type="evidence" value="ECO:0007669"/>
    <property type="project" value="Ensembl"/>
</dbReference>
<dbReference type="GO" id="GO:0003796">
    <property type="term" value="F:lysozyme activity"/>
    <property type="evidence" value="ECO:0007669"/>
    <property type="project" value="UniProtKB-EC"/>
</dbReference>
<dbReference type="GO" id="GO:0050829">
    <property type="term" value="P:defense response to Gram-negative bacterium"/>
    <property type="evidence" value="ECO:0007669"/>
    <property type="project" value="TreeGrafter"/>
</dbReference>
<dbReference type="GO" id="GO:0050830">
    <property type="term" value="P:defense response to Gram-positive bacterium"/>
    <property type="evidence" value="ECO:0007669"/>
    <property type="project" value="Ensembl"/>
</dbReference>
<dbReference type="GO" id="GO:0031640">
    <property type="term" value="P:killing of cells of another organism"/>
    <property type="evidence" value="ECO:0007669"/>
    <property type="project" value="UniProtKB-KW"/>
</dbReference>
<dbReference type="CDD" id="cd16897">
    <property type="entry name" value="LYZ_C"/>
    <property type="match status" value="1"/>
</dbReference>
<dbReference type="FunFam" id="1.10.530.10:FF:000001">
    <property type="entry name" value="Lysozyme C"/>
    <property type="match status" value="1"/>
</dbReference>
<dbReference type="Gene3D" id="1.10.530.10">
    <property type="match status" value="1"/>
</dbReference>
<dbReference type="InterPro" id="IPR001916">
    <property type="entry name" value="Glyco_hydro_22"/>
</dbReference>
<dbReference type="InterPro" id="IPR019799">
    <property type="entry name" value="Glyco_hydro_22_CS"/>
</dbReference>
<dbReference type="InterPro" id="IPR000974">
    <property type="entry name" value="Glyco_hydro_22_lys"/>
</dbReference>
<dbReference type="InterPro" id="IPR023346">
    <property type="entry name" value="Lysozyme-like_dom_sf"/>
</dbReference>
<dbReference type="PANTHER" id="PTHR11407">
    <property type="entry name" value="LYSOZYME C"/>
    <property type="match status" value="1"/>
</dbReference>
<dbReference type="PANTHER" id="PTHR11407:SF28">
    <property type="entry name" value="LYSOZYME C"/>
    <property type="match status" value="1"/>
</dbReference>
<dbReference type="Pfam" id="PF00062">
    <property type="entry name" value="Lys"/>
    <property type="match status" value="1"/>
</dbReference>
<dbReference type="PRINTS" id="PR00137">
    <property type="entry name" value="LYSOZYME"/>
</dbReference>
<dbReference type="PRINTS" id="PR00135">
    <property type="entry name" value="LYZLACT"/>
</dbReference>
<dbReference type="SMART" id="SM00263">
    <property type="entry name" value="LYZ1"/>
    <property type="match status" value="1"/>
</dbReference>
<dbReference type="SUPFAM" id="SSF53955">
    <property type="entry name" value="Lysozyme-like"/>
    <property type="match status" value="1"/>
</dbReference>
<dbReference type="PROSITE" id="PS00128">
    <property type="entry name" value="GLYCOSYL_HYDROL_F22_1"/>
    <property type="match status" value="1"/>
</dbReference>
<dbReference type="PROSITE" id="PS51348">
    <property type="entry name" value="GLYCOSYL_HYDROL_F22_2"/>
    <property type="match status" value="1"/>
</dbReference>
<evidence type="ECO:0000250" key="1"/>
<evidence type="ECO:0000255" key="2">
    <source>
        <dbReference type="PROSITE-ProRule" id="PRU00680"/>
    </source>
</evidence>
<proteinExistence type="evidence at transcript level"/>
<sequence>MKAVIILGLVLLSVTVQGKIFERCELARTLKRLGLDGYRGISLANWVCLAKWESDYNTQATNYNPGDQSTDYGIFQINSHYWCNNGKTPGAVNACHISCNALLQDNIADAVTCAKRVVSDPQGIRAWVAWRNHCQNRDVSQYVQGCGV</sequence>